<evidence type="ECO:0000250" key="1"/>
<evidence type="ECO:0000255" key="2"/>
<evidence type="ECO:0000255" key="3">
    <source>
        <dbReference type="PROSITE-ProRule" id="PRU00521"/>
    </source>
</evidence>
<evidence type="ECO:0000256" key="4">
    <source>
        <dbReference type="SAM" id="MobiDB-lite"/>
    </source>
</evidence>
<evidence type="ECO:0000305" key="5"/>
<organism>
    <name type="scientific">Rattus norvegicus</name>
    <name type="common">Rat</name>
    <dbReference type="NCBI Taxonomy" id="10116"/>
    <lineage>
        <taxon>Eukaryota</taxon>
        <taxon>Metazoa</taxon>
        <taxon>Chordata</taxon>
        <taxon>Craniata</taxon>
        <taxon>Vertebrata</taxon>
        <taxon>Euteleostomi</taxon>
        <taxon>Mammalia</taxon>
        <taxon>Eutheria</taxon>
        <taxon>Euarchontoglires</taxon>
        <taxon>Glires</taxon>
        <taxon>Rodentia</taxon>
        <taxon>Myomorpha</taxon>
        <taxon>Muroidea</taxon>
        <taxon>Muridae</taxon>
        <taxon>Murinae</taxon>
        <taxon>Rattus</taxon>
    </lineage>
</organism>
<name>ADA2C_RAT</name>
<protein>
    <recommendedName>
        <fullName>Alpha-2C adrenergic receptor</fullName>
    </recommendedName>
    <alternativeName>
        <fullName>Alpha-2 adrenergic receptor subtype C4</fullName>
    </alternativeName>
    <alternativeName>
        <fullName>Alpha-2C adrenoreceptor</fullName>
        <shortName>Alpha-2C adrenoceptor</shortName>
        <shortName>Alpha-2CAR</shortName>
    </alternativeName>
</protein>
<keyword id="KW-1003">Cell membrane</keyword>
<keyword id="KW-1015">Disulfide bond</keyword>
<keyword id="KW-0297">G-protein coupled receptor</keyword>
<keyword id="KW-0325">Glycoprotein</keyword>
<keyword id="KW-0472">Membrane</keyword>
<keyword id="KW-0675">Receptor</keyword>
<keyword id="KW-1185">Reference proteome</keyword>
<keyword id="KW-0807">Transducer</keyword>
<keyword id="KW-0812">Transmembrane</keyword>
<keyword id="KW-1133">Transmembrane helix</keyword>
<sequence>MASPALAAALAAAAAEGPNGSDAGEWGSGGGANASGTDWGPPPGQYSAGAVAGLAAVVGFLIVFTVVGNVLVVIAVLTSRALRAPQNLFLVSLASADILVATLVMPFSLANELMAYWYFGQVWCGVYLALDVLFCTSSIVHLCAISLDRYWSVTQAVEYNLKRTPRRVKATIVAVWLISAVISFPPLVSFYRRPDGAAYPQCGLNDETWYILSSCIGSFFAPCLIMGLVYARIYRVAKLRTRTLSEKRGPAGPDGASPTTENGLGKAAGENGHCAPPRTEVEPDESSAAERRRRRGALRRGGRRREGAEGDTGSADGPGPGLAAEQGARTASRSPGPGGRLSRASSRSVEFFLSRRRRARSSVCRRKVAQAREKRFTFVLAVVMGVFVLCWFPFFFSYSLYGICREACQLPEPLFKFFFWIGYCNSSLNPVIYTVFNQDFRRSFKHILFRRRRRGFRQ</sequence>
<gene>
    <name type="primary">Adra2c</name>
</gene>
<comment type="function">
    <text>Alpha-2 adrenergic receptors mediate the catecholamine-induced inhibition of adenylate cyclase through the action of G proteins.</text>
</comment>
<comment type="subcellular location">
    <subcellularLocation>
        <location>Cell membrane</location>
        <topology>Multi-pass membrane protein</topology>
    </subcellularLocation>
</comment>
<comment type="similarity">
    <text evidence="3">Belongs to the G-protein coupled receptor 1 family. Adrenergic receptor subfamily. ADRA2C sub-subfamily.</text>
</comment>
<reference key="1">
    <citation type="journal article" date="1991" name="Proc. Natl. Acad. Sci. U.S.A.">
        <title>Cloning and expression of a rat brain alpha 2B-adrenergic receptor.</title>
        <authorList>
            <person name="Flordellis C.S."/>
            <person name="Handy D.E."/>
            <person name="Bresnahan M.R."/>
            <person name="Zannis V.I."/>
            <person name="Gavras H."/>
        </authorList>
    </citation>
    <scope>NUCLEOTIDE SEQUENCE [MRNA]</scope>
</reference>
<reference key="2">
    <citation type="journal article" date="1991" name="FEBS Lett.">
        <title>The rat alpha 2-C4 adrenergic receptor gene encodes a novel pharmacological subtype.</title>
        <authorList>
            <person name="Voigt M.M."/>
            <person name="McCune S.K."/>
            <person name="Kanterman R.Y."/>
            <person name="Felder C.C."/>
        </authorList>
    </citation>
    <scope>NUCLEOTIDE SEQUENCE [GENOMIC DNA]</scope>
</reference>
<reference key="3">
    <citation type="journal article" date="1991" name="J. Biol. Chem.">
        <title>Isolation of rat genomic clones encoding subtypes of the alpha 2-adrenergic receptor. Identification of a unique receptor subtype.</title>
        <authorList>
            <person name="Lanier S.M."/>
            <person name="Downing S."/>
            <person name="Duzic E."/>
            <person name="Homcy C.J."/>
        </authorList>
    </citation>
    <scope>NUCLEOTIDE SEQUENCE [GENOMIC DNA]</scope>
</reference>
<reference key="4">
    <citation type="journal article" date="1992" name="Shigaku">
        <title>Cloning of rat alpha-2-B-adrenergic receptor gene and expression in rat submandibular gland.</title>
        <authorList>
            <person name="Saitoh M."/>
            <person name="Imai A."/>
            <person name="Shimomura H."/>
        </authorList>
    </citation>
    <scope>NUCLEOTIDE SEQUENCE [GENOMIC DNA]</scope>
</reference>
<proteinExistence type="evidence at transcript level"/>
<dbReference type="EMBL" id="M58316">
    <property type="protein sequence ID" value="AAA40634.1"/>
    <property type="molecule type" value="mRNA"/>
</dbReference>
<dbReference type="EMBL" id="X57659">
    <property type="protein sequence ID" value="CAA40861.1"/>
    <property type="molecule type" value="Genomic_DNA"/>
</dbReference>
<dbReference type="EMBL" id="M62371">
    <property type="protein sequence ID" value="AAA42033.1"/>
    <property type="molecule type" value="Genomic_DNA"/>
</dbReference>
<dbReference type="EMBL" id="D00819">
    <property type="protein sequence ID" value="BAA00700.1"/>
    <property type="molecule type" value="Genomic_DNA"/>
</dbReference>
<dbReference type="PIR" id="A37869">
    <property type="entry name" value="A37869"/>
</dbReference>
<dbReference type="PIR" id="A40392">
    <property type="entry name" value="A40392"/>
</dbReference>
<dbReference type="RefSeq" id="NP_612515.2">
    <property type="nucleotide sequence ID" value="NM_138506.2"/>
</dbReference>
<dbReference type="SMR" id="P22086"/>
<dbReference type="FunCoup" id="P22086">
    <property type="interactions" value="98"/>
</dbReference>
<dbReference type="STRING" id="10116.ENSRNOP00000012322"/>
<dbReference type="BindingDB" id="P22086"/>
<dbReference type="ChEMBL" id="CHEMBL314"/>
<dbReference type="DrugCentral" id="P22086"/>
<dbReference type="GlyCosmos" id="P22086">
    <property type="glycosylation" value="2 sites, No reported glycans"/>
</dbReference>
<dbReference type="GlyGen" id="P22086">
    <property type="glycosylation" value="2 sites"/>
</dbReference>
<dbReference type="PhosphoSitePlus" id="P22086"/>
<dbReference type="PaxDb" id="10116-ENSRNOP00000012322"/>
<dbReference type="Ensembl" id="ENSRNOT00000012322.4">
    <property type="protein sequence ID" value="ENSRNOP00000012322.1"/>
    <property type="gene ID" value="ENSRNOG00000009299.4"/>
</dbReference>
<dbReference type="GeneID" id="24175"/>
<dbReference type="KEGG" id="rno:24175"/>
<dbReference type="AGR" id="RGD:2058"/>
<dbReference type="CTD" id="152"/>
<dbReference type="RGD" id="2058">
    <property type="gene designation" value="Adra2c"/>
</dbReference>
<dbReference type="eggNOG" id="KOG3656">
    <property type="taxonomic scope" value="Eukaryota"/>
</dbReference>
<dbReference type="GeneTree" id="ENSGT00940000161707"/>
<dbReference type="HOGENOM" id="CLU_009579_11_1_1"/>
<dbReference type="InParanoid" id="P22086"/>
<dbReference type="OMA" id="CREPCRI"/>
<dbReference type="OrthoDB" id="5975661at2759"/>
<dbReference type="PhylomeDB" id="P22086"/>
<dbReference type="TreeFam" id="TF316350"/>
<dbReference type="Reactome" id="R-RNO-390696">
    <property type="pathway name" value="Adrenoceptors"/>
</dbReference>
<dbReference type="Reactome" id="R-RNO-392023">
    <property type="pathway name" value="Adrenaline signalling through Alpha-2 adrenergic receptor"/>
</dbReference>
<dbReference type="Reactome" id="R-RNO-400042">
    <property type="pathway name" value="Adrenaline,noradrenaline inhibits insulin secretion"/>
</dbReference>
<dbReference type="Reactome" id="R-RNO-418594">
    <property type="pathway name" value="G alpha (i) signalling events"/>
</dbReference>
<dbReference type="Reactome" id="R-RNO-418597">
    <property type="pathway name" value="G alpha (z) signalling events"/>
</dbReference>
<dbReference type="Reactome" id="R-RNO-5683826">
    <property type="pathway name" value="Surfactant metabolism"/>
</dbReference>
<dbReference type="PRO" id="PR:P22086"/>
<dbReference type="Proteomes" id="UP000002494">
    <property type="component" value="Chromosome 14"/>
</dbReference>
<dbReference type="Bgee" id="ENSRNOG00000009299">
    <property type="expression patterns" value="Expressed in frontal cortex and 1 other cell type or tissue"/>
</dbReference>
<dbReference type="GO" id="GO:0030424">
    <property type="term" value="C:axon"/>
    <property type="evidence" value="ECO:0000314"/>
    <property type="project" value="RGD"/>
</dbReference>
<dbReference type="GO" id="GO:0043679">
    <property type="term" value="C:axon terminus"/>
    <property type="evidence" value="ECO:0000314"/>
    <property type="project" value="RGD"/>
</dbReference>
<dbReference type="GO" id="GO:0005737">
    <property type="term" value="C:cytoplasm"/>
    <property type="evidence" value="ECO:0000266"/>
    <property type="project" value="RGD"/>
</dbReference>
<dbReference type="GO" id="GO:0098978">
    <property type="term" value="C:glutamatergic synapse"/>
    <property type="evidence" value="ECO:0000314"/>
    <property type="project" value="SynGO"/>
</dbReference>
<dbReference type="GO" id="GO:0043025">
    <property type="term" value="C:neuronal cell body"/>
    <property type="evidence" value="ECO:0000314"/>
    <property type="project" value="RGD"/>
</dbReference>
<dbReference type="GO" id="GO:0005886">
    <property type="term" value="C:plasma membrane"/>
    <property type="evidence" value="ECO:0000266"/>
    <property type="project" value="RGD"/>
</dbReference>
<dbReference type="GO" id="GO:0098839">
    <property type="term" value="C:postsynaptic density membrane"/>
    <property type="evidence" value="ECO:0000314"/>
    <property type="project" value="SynGO"/>
</dbReference>
<dbReference type="GO" id="GO:0045211">
    <property type="term" value="C:postsynaptic membrane"/>
    <property type="evidence" value="ECO:0000314"/>
    <property type="project" value="SynGO"/>
</dbReference>
<dbReference type="GO" id="GO:0031694">
    <property type="term" value="F:alpha-2A adrenergic receptor binding"/>
    <property type="evidence" value="ECO:0000266"/>
    <property type="project" value="RGD"/>
</dbReference>
<dbReference type="GO" id="GO:0004938">
    <property type="term" value="F:alpha2-adrenergic receptor activity"/>
    <property type="evidence" value="ECO:0000266"/>
    <property type="project" value="RGD"/>
</dbReference>
<dbReference type="GO" id="GO:0051379">
    <property type="term" value="F:epinephrine binding"/>
    <property type="evidence" value="ECO:0000266"/>
    <property type="project" value="RGD"/>
</dbReference>
<dbReference type="GO" id="GO:0004930">
    <property type="term" value="F:G protein-coupled receptor activity"/>
    <property type="evidence" value="ECO:0000266"/>
    <property type="project" value="RGD"/>
</dbReference>
<dbReference type="GO" id="GO:0046982">
    <property type="term" value="F:protein heterodimerization activity"/>
    <property type="evidence" value="ECO:0000266"/>
    <property type="project" value="RGD"/>
</dbReference>
<dbReference type="GO" id="GO:0042803">
    <property type="term" value="F:protein homodimerization activity"/>
    <property type="evidence" value="ECO:0000266"/>
    <property type="project" value="RGD"/>
</dbReference>
<dbReference type="GO" id="GO:0071875">
    <property type="term" value="P:adrenergic receptor signaling pathway"/>
    <property type="evidence" value="ECO:0000266"/>
    <property type="project" value="RGD"/>
</dbReference>
<dbReference type="GO" id="GO:0007565">
    <property type="term" value="P:female pregnancy"/>
    <property type="evidence" value="ECO:0000315"/>
    <property type="project" value="RGD"/>
</dbReference>
<dbReference type="GO" id="GO:0007186">
    <property type="term" value="P:G protein-coupled receptor signaling pathway"/>
    <property type="evidence" value="ECO:0000266"/>
    <property type="project" value="RGD"/>
</dbReference>
<dbReference type="GO" id="GO:0070473">
    <property type="term" value="P:negative regulation of uterine smooth muscle contraction"/>
    <property type="evidence" value="ECO:0000315"/>
    <property type="project" value="RGD"/>
</dbReference>
<dbReference type="GO" id="GO:0030168">
    <property type="term" value="P:platelet activation"/>
    <property type="evidence" value="ECO:0007669"/>
    <property type="project" value="InterPro"/>
</dbReference>
<dbReference type="GO" id="GO:0043410">
    <property type="term" value="P:positive regulation of MAPK cascade"/>
    <property type="evidence" value="ECO:0000266"/>
    <property type="project" value="RGD"/>
</dbReference>
<dbReference type="GO" id="GO:0045666">
    <property type="term" value="P:positive regulation of neuron differentiation"/>
    <property type="evidence" value="ECO:0000266"/>
    <property type="project" value="RGD"/>
</dbReference>
<dbReference type="GO" id="GO:0045907">
    <property type="term" value="P:positive regulation of vasoconstriction"/>
    <property type="evidence" value="ECO:0000315"/>
    <property type="project" value="RGD"/>
</dbReference>
<dbReference type="CDD" id="cd15323">
    <property type="entry name" value="7tmA_alpha2C_AR"/>
    <property type="match status" value="1"/>
</dbReference>
<dbReference type="FunFam" id="1.20.1070.10:FF:000100">
    <property type="entry name" value="alpha-2B adrenergic receptor"/>
    <property type="match status" value="1"/>
</dbReference>
<dbReference type="FunFam" id="1.20.1070.10:FF:000245">
    <property type="entry name" value="Alpha-2C adrenergic receptor"/>
    <property type="match status" value="1"/>
</dbReference>
<dbReference type="Gene3D" id="1.20.1070.10">
    <property type="entry name" value="Rhodopsin 7-helix transmembrane proteins"/>
    <property type="match status" value="2"/>
</dbReference>
<dbReference type="InterPro" id="IPR002233">
    <property type="entry name" value="ADR_fam"/>
</dbReference>
<dbReference type="InterPro" id="IPR000735">
    <property type="entry name" value="ADRA2C_rcpt"/>
</dbReference>
<dbReference type="InterPro" id="IPR000276">
    <property type="entry name" value="GPCR_Rhodpsn"/>
</dbReference>
<dbReference type="InterPro" id="IPR017452">
    <property type="entry name" value="GPCR_Rhodpsn_7TM"/>
</dbReference>
<dbReference type="PANTHER" id="PTHR24248">
    <property type="entry name" value="ADRENERGIC RECEPTOR-RELATED G-PROTEIN COUPLED RECEPTOR"/>
    <property type="match status" value="1"/>
</dbReference>
<dbReference type="PANTHER" id="PTHR24248:SF25">
    <property type="entry name" value="ALPHA-2C ADRENERGIC RECEPTOR"/>
    <property type="match status" value="1"/>
</dbReference>
<dbReference type="Pfam" id="PF00001">
    <property type="entry name" value="7tm_1"/>
    <property type="match status" value="1"/>
</dbReference>
<dbReference type="PRINTS" id="PR01103">
    <property type="entry name" value="ADRENERGICR"/>
</dbReference>
<dbReference type="PRINTS" id="PR00560">
    <property type="entry name" value="ADRENRGCA2CR"/>
</dbReference>
<dbReference type="PRINTS" id="PR00237">
    <property type="entry name" value="GPCRRHODOPSN"/>
</dbReference>
<dbReference type="SMART" id="SM01381">
    <property type="entry name" value="7TM_GPCR_Srsx"/>
    <property type="match status" value="1"/>
</dbReference>
<dbReference type="SUPFAM" id="SSF81321">
    <property type="entry name" value="Family A G protein-coupled receptor-like"/>
    <property type="match status" value="1"/>
</dbReference>
<dbReference type="PROSITE" id="PS00237">
    <property type="entry name" value="G_PROTEIN_RECEP_F1_1"/>
    <property type="match status" value="1"/>
</dbReference>
<dbReference type="PROSITE" id="PS50262">
    <property type="entry name" value="G_PROTEIN_RECEP_F1_2"/>
    <property type="match status" value="1"/>
</dbReference>
<feature type="chain" id="PRO_0000069107" description="Alpha-2C adrenergic receptor">
    <location>
        <begin position="1"/>
        <end position="458"/>
    </location>
</feature>
<feature type="topological domain" description="Extracellular" evidence="1">
    <location>
        <begin position="1"/>
        <end position="51"/>
    </location>
</feature>
<feature type="transmembrane region" description="Helical; Name=1" evidence="1">
    <location>
        <begin position="52"/>
        <end position="76"/>
    </location>
</feature>
<feature type="topological domain" description="Cytoplasmic" evidence="1">
    <location>
        <begin position="77"/>
        <end position="88"/>
    </location>
</feature>
<feature type="transmembrane region" description="Helical; Name=2" evidence="1">
    <location>
        <begin position="89"/>
        <end position="114"/>
    </location>
</feature>
<feature type="topological domain" description="Extracellular" evidence="1">
    <location>
        <begin position="115"/>
        <end position="124"/>
    </location>
</feature>
<feature type="transmembrane region" description="Helical; Name=3" evidence="1">
    <location>
        <begin position="125"/>
        <end position="147"/>
    </location>
</feature>
<feature type="topological domain" description="Cytoplasmic" evidence="1">
    <location>
        <begin position="148"/>
        <end position="168"/>
    </location>
</feature>
<feature type="transmembrane region" description="Helical; Name=4" evidence="1">
    <location>
        <begin position="169"/>
        <end position="191"/>
    </location>
</feature>
<feature type="topological domain" description="Extracellular" evidence="1">
    <location>
        <begin position="192"/>
        <end position="207"/>
    </location>
</feature>
<feature type="transmembrane region" description="Helical; Name=5" evidence="1">
    <location>
        <begin position="208"/>
        <end position="231"/>
    </location>
</feature>
<feature type="topological domain" description="Cytoplasmic" evidence="1">
    <location>
        <begin position="232"/>
        <end position="379"/>
    </location>
</feature>
<feature type="transmembrane region" description="Helical; Name=6" evidence="1">
    <location>
        <begin position="380"/>
        <end position="403"/>
    </location>
</feature>
<feature type="topological domain" description="Extracellular" evidence="1">
    <location>
        <begin position="404"/>
        <end position="416"/>
    </location>
</feature>
<feature type="transmembrane region" description="Helical; Name=7" evidence="1">
    <location>
        <begin position="417"/>
        <end position="437"/>
    </location>
</feature>
<feature type="topological domain" description="Cytoplasmic" evidence="1">
    <location>
        <begin position="438"/>
        <end position="458"/>
    </location>
</feature>
<feature type="region of interest" description="Disordered" evidence="4">
    <location>
        <begin position="245"/>
        <end position="343"/>
    </location>
</feature>
<feature type="compositionally biased region" description="Basic residues" evidence="4">
    <location>
        <begin position="291"/>
        <end position="303"/>
    </location>
</feature>
<feature type="site" description="Implicated in ligand binding" evidence="1">
    <location>
        <position position="131"/>
    </location>
</feature>
<feature type="site" description="Implicated in catechol agonist binding and receptor activation" evidence="1">
    <location>
        <position position="214"/>
    </location>
</feature>
<feature type="site" description="Implicated in catechol agonist binding and receptor activation" evidence="1">
    <location>
        <position position="218"/>
    </location>
</feature>
<feature type="glycosylation site" description="N-linked (GlcNAc...) asparagine" evidence="2">
    <location>
        <position position="19"/>
    </location>
</feature>
<feature type="glycosylation site" description="N-linked (GlcNAc...) asparagine" evidence="2">
    <location>
        <position position="33"/>
    </location>
</feature>
<feature type="disulfide bond" evidence="3">
    <location>
        <begin position="124"/>
        <end position="202"/>
    </location>
</feature>
<feature type="sequence conflict" description="In Ref. 4; BAA00700." evidence="5" ref="4">
    <original>G</original>
    <variation>R</variation>
    <location>
        <position position="24"/>
    </location>
</feature>
<feature type="sequence conflict" description="In Ref. 1; AAA40634." evidence="5" ref="1">
    <original>G</original>
    <variation>A</variation>
    <location>
        <position position="40"/>
    </location>
</feature>
<feature type="sequence conflict" description="In Ref. 1; AAA40634." evidence="5" ref="1">
    <original>N</original>
    <variation>T</variation>
    <location>
        <position position="69"/>
    </location>
</feature>
<feature type="sequence conflict" description="In Ref. 2; CAA40861." evidence="5" ref="2">
    <original>Q</original>
    <variation>E</variation>
    <location>
        <position position="155"/>
    </location>
</feature>
<feature type="sequence conflict" description="In Ref. 1; AAA40634." evidence="5" ref="1">
    <original>S</original>
    <variation>T</variation>
    <location>
        <position position="245"/>
    </location>
</feature>
<feature type="sequence conflict" description="In Ref. 3; AAA42033." evidence="5" ref="3">
    <original>G</original>
    <variation>R</variation>
    <location>
        <position position="252"/>
    </location>
</feature>
<feature type="sequence conflict" description="In Ref. 4; BAA00700." evidence="5" ref="4">
    <original>A</original>
    <variation>R</variation>
    <location>
        <position position="275"/>
    </location>
</feature>
<feature type="sequence conflict" description="In Ref. 3; AAA42033." evidence="5" ref="3">
    <original>L</original>
    <variation>V</variation>
    <location>
        <position position="298"/>
    </location>
</feature>
<accession>P22086</accession>